<keyword id="KW-0298">Galactitol metabolism</keyword>
<keyword id="KW-1185">Reference proteome</keyword>
<reference key="1">
    <citation type="journal article" date="2002" name="Proc. Natl. Acad. Sci. U.S.A.">
        <title>Extensive mosaic structure revealed by the complete genome sequence of uropathogenic Escherichia coli.</title>
        <authorList>
            <person name="Welch R.A."/>
            <person name="Burland V."/>
            <person name="Plunkett G. III"/>
            <person name="Redford P."/>
            <person name="Roesch P."/>
            <person name="Rasko D."/>
            <person name="Buckles E.L."/>
            <person name="Liou S.-R."/>
            <person name="Boutin A."/>
            <person name="Hackett J."/>
            <person name="Stroud D."/>
            <person name="Mayhew G.F."/>
            <person name="Rose D.J."/>
            <person name="Zhou S."/>
            <person name="Schwartz D.C."/>
            <person name="Perna N.T."/>
            <person name="Mobley H.L.T."/>
            <person name="Donnenberg M.S."/>
            <person name="Blattner F.R."/>
        </authorList>
    </citation>
    <scope>NUCLEOTIDE SEQUENCE [LARGE SCALE GENOMIC DNA]</scope>
    <source>
        <strain>CFT073 / ATCC 700928 / UPEC</strain>
    </source>
</reference>
<sequence length="420" mass="46990">MKTLIARHKAGEHIGICSVCSAHPLVIEAALAFDRNSTRKVLIEATSNQVNQFGGYTGMTPADFREFVFAIADKVGFARERIILGGDHLGPNCWQQENADAAMEKSVELVKAYVRAGFSKIHLDASMSCADDSIPLAPETVAERAAVLCLAAESVATDCQREQLNYVIGTEVPVPGGEASAIQSVHITQVEDAANTLRTHQKAFIARGLAEALTRVIAIVVQPGVEFDHSNIIHYQAQXAQALAQWIEKTKMVYEAHSTDYQTQXAYRELVRDHFAILKVGPALTFALREAIFALAQIEQELIAPENRSRCLAVIEEVMLDEPQYWKKYYRTGFNDSLLDIRYSLSDRIRYYWPHSRIKNSVETMMVNLEGVDIPLGMISQYLPKQFERIQSGELSAIPHQLIMDKIYDVLRAYRYGCAE</sequence>
<comment type="function">
    <text evidence="1">Component of the tagatose-1,6-bisphosphate aldolase GatYZ that is required for full activity and stability of the Y subunit. Could have a chaperone-like function for the proper and stable folding of GatY. When expressed alone, GatZ does not show any aldolase activity. Is involved in the catabolism of galactitol.</text>
</comment>
<comment type="pathway">
    <text evidence="1">Carbohydrate metabolism; D-tagatose 6-phosphate degradation; D-glyceraldehyde 3-phosphate and glycerone phosphate from D-tagatose 6-phosphate: step 2/2.</text>
</comment>
<comment type="subunit">
    <text evidence="1">Forms a complex with GatY.</text>
</comment>
<comment type="similarity">
    <text evidence="1">Belongs to the GatZ/KbaZ family. GatZ subfamily.</text>
</comment>
<feature type="chain" id="PRO_0000372501" description="D-tagatose-1,6-bisphosphate aldolase subunit GatZ">
    <location>
        <begin position="1"/>
        <end position="420"/>
    </location>
</feature>
<organism>
    <name type="scientific">Escherichia coli O6:H1 (strain CFT073 / ATCC 700928 / UPEC)</name>
    <dbReference type="NCBI Taxonomy" id="199310"/>
    <lineage>
        <taxon>Bacteria</taxon>
        <taxon>Pseudomonadati</taxon>
        <taxon>Pseudomonadota</taxon>
        <taxon>Gammaproteobacteria</taxon>
        <taxon>Enterobacterales</taxon>
        <taxon>Enterobacteriaceae</taxon>
        <taxon>Escherichia</taxon>
    </lineage>
</organism>
<gene>
    <name evidence="1" type="primary">gatZ</name>
    <name type="ordered locus">c2620</name>
</gene>
<protein>
    <recommendedName>
        <fullName evidence="1">D-tagatose-1,6-bisphosphate aldolase subunit GatZ</fullName>
    </recommendedName>
</protein>
<proteinExistence type="inferred from homology"/>
<name>GATZ_ECOL6</name>
<evidence type="ECO:0000255" key="1">
    <source>
        <dbReference type="HAMAP-Rule" id="MF_01296"/>
    </source>
</evidence>
<dbReference type="EMBL" id="AE014075">
    <property type="protein sequence ID" value="AAN81076.1"/>
    <property type="molecule type" value="Genomic_DNA"/>
</dbReference>
<dbReference type="RefSeq" id="WP_000853837.1">
    <property type="nucleotide sequence ID" value="NC_004431.1"/>
</dbReference>
<dbReference type="STRING" id="199310.c2620"/>
<dbReference type="KEGG" id="ecc:c2620"/>
<dbReference type="eggNOG" id="COG4573">
    <property type="taxonomic scope" value="Bacteria"/>
</dbReference>
<dbReference type="HOGENOM" id="CLU_053334_0_0_6"/>
<dbReference type="BioCyc" id="ECOL199310:C2620-MONOMER"/>
<dbReference type="UniPathway" id="UPA00704">
    <property type="reaction ID" value="UER00716"/>
</dbReference>
<dbReference type="Proteomes" id="UP000001410">
    <property type="component" value="Chromosome"/>
</dbReference>
<dbReference type="GO" id="GO:0005886">
    <property type="term" value="C:plasma membrane"/>
    <property type="evidence" value="ECO:0007669"/>
    <property type="project" value="TreeGrafter"/>
</dbReference>
<dbReference type="GO" id="GO:2001059">
    <property type="term" value="P:D-tagatose 6-phosphate catabolic process"/>
    <property type="evidence" value="ECO:0007669"/>
    <property type="project" value="UniProtKB-UniRule"/>
</dbReference>
<dbReference type="GO" id="GO:0019402">
    <property type="term" value="P:galactitol metabolic process"/>
    <property type="evidence" value="ECO:0007669"/>
    <property type="project" value="UniProtKB-KW"/>
</dbReference>
<dbReference type="GO" id="GO:0009401">
    <property type="term" value="P:phosphoenolpyruvate-dependent sugar phosphotransferase system"/>
    <property type="evidence" value="ECO:0007669"/>
    <property type="project" value="TreeGrafter"/>
</dbReference>
<dbReference type="FunFam" id="3.20.20.70:FF:000141">
    <property type="entry name" value="D-tagatose-1,6-bisphosphate aldolase subunit GatZ"/>
    <property type="match status" value="1"/>
</dbReference>
<dbReference type="Gene3D" id="3.20.20.70">
    <property type="entry name" value="Aldolase class I"/>
    <property type="match status" value="1"/>
</dbReference>
<dbReference type="Gene3D" id="1.10.400.20">
    <property type="entry name" value="putative tagatose 6-phosphate kinase domain like"/>
    <property type="match status" value="1"/>
</dbReference>
<dbReference type="HAMAP" id="MF_01296">
    <property type="entry name" value="Tagatose_aldol_GatZ"/>
    <property type="match status" value="1"/>
</dbReference>
<dbReference type="InterPro" id="IPR013785">
    <property type="entry name" value="Aldolase_TIM"/>
</dbReference>
<dbReference type="InterPro" id="IPR012062">
    <property type="entry name" value="GatZ/KbaZ-like"/>
</dbReference>
<dbReference type="InterPro" id="IPR050303">
    <property type="entry name" value="GatZ_KbaZ_carbometab"/>
</dbReference>
<dbReference type="InterPro" id="IPR023436">
    <property type="entry name" value="TagBP_ald_GatZ"/>
</dbReference>
<dbReference type="NCBIfam" id="TIGR02810">
    <property type="entry name" value="agaZ_gatZ"/>
    <property type="match status" value="1"/>
</dbReference>
<dbReference type="NCBIfam" id="NF011626">
    <property type="entry name" value="PRK15052.1"/>
    <property type="match status" value="1"/>
</dbReference>
<dbReference type="PANTHER" id="PTHR32502:SF12">
    <property type="entry name" value="D-TAGATOSE-1,6-BISPHOSPHATE ALDOLASE SUBUNIT GATZ"/>
    <property type="match status" value="1"/>
</dbReference>
<dbReference type="PANTHER" id="PTHR32502">
    <property type="entry name" value="N-ACETYLGALACTOSAMINE PERMEASE II COMPONENT-RELATED"/>
    <property type="match status" value="1"/>
</dbReference>
<dbReference type="Pfam" id="PF08013">
    <property type="entry name" value="GatZ_KbaZ-like"/>
    <property type="match status" value="1"/>
</dbReference>
<dbReference type="PIRSF" id="PIRSF009264">
    <property type="entry name" value="TagBP_ald_AgaZ"/>
    <property type="match status" value="1"/>
</dbReference>
<dbReference type="SUPFAM" id="SSF51569">
    <property type="entry name" value="Aldolase"/>
    <property type="match status" value="1"/>
</dbReference>
<accession>Q8FFY8</accession>